<reference key="1">
    <citation type="journal article" date="1998" name="Virology">
        <title>Genes and regulatory sites of the 'host-takeover module' in the terminal redundancy of Bacillus subtilis bacteriophage SPO1.</title>
        <authorList>
            <person name="Stewart C.R."/>
            <person name="Gaslightwala I."/>
            <person name="Hinata K."/>
            <person name="Krolikowski K.A."/>
            <person name="Needleman D.S."/>
            <person name="Peng A.S.-Y."/>
            <person name="Peterman M.A."/>
            <person name="Tobias A."/>
            <person name="Wei P."/>
        </authorList>
    </citation>
    <scope>NUCLEOTIDE SEQUENCE [GENOMIC DNA]</scope>
</reference>
<feature type="chain" id="PRO_0000106159" description="Putative gene 53 protein">
    <location>
        <begin position="1"/>
        <end position="221"/>
    </location>
</feature>
<dbReference type="EMBL" id="AF031901">
    <property type="protein sequence ID" value="AAC29022.1"/>
    <property type="molecule type" value="Genomic_DNA"/>
</dbReference>
<dbReference type="RefSeq" id="YP_002300299.1">
    <property type="nucleotide sequence ID" value="NC_011421.1"/>
</dbReference>
<dbReference type="GeneID" id="7009012"/>
<dbReference type="KEGG" id="vg:7009012"/>
<gene>
    <name type="primary">53</name>
</gene>
<accession>O48407</accession>
<proteinExistence type="predicted"/>
<name>GP53_BPSP1</name>
<organism>
    <name type="scientific">Bacillus phage SP01</name>
    <name type="common">Bacteriophage SP01</name>
    <dbReference type="NCBI Taxonomy" id="2884427"/>
    <lineage>
        <taxon>Viruses</taxon>
        <taxon>Duplodnaviria</taxon>
        <taxon>Heunggongvirae</taxon>
        <taxon>Uroviricota</taxon>
        <taxon>Caudoviricetes</taxon>
        <taxon>Herelleviridae</taxon>
        <taxon>Spounavirinae</taxon>
        <taxon>Okubovirus</taxon>
        <taxon>Okubovirus SPO1</taxon>
    </lineage>
</organism>
<organismHost>
    <name type="scientific">Bacillus subtilis</name>
    <dbReference type="NCBI Taxonomy" id="1423"/>
</organismHost>
<sequence length="221" mass="25247">MRTYWNVSLDRSNGKRFERLVHYICVPIISIHHAEDTISMTRKEVGHLAETIANHIILDINGTYRTFSVNDIVHCSLEKVITLEGDVTNEFIDRLQILVNKEVQGSQSTQQSLSSVFESTLEKYNSPDDFADYLEETEEEVDYEDYSLDDTIDAISYALKTQEPVQAEWCLLMVDVYTGTLTEVTVETDKDKTLDSILGKYLENGFECVSKKRLGEVLRSA</sequence>
<protein>
    <recommendedName>
        <fullName>Putative gene 53 protein</fullName>
    </recommendedName>
</protein>